<organism>
    <name type="scientific">Albidiferax ferrireducens (strain ATCC BAA-621 / DSM 15236 / T118)</name>
    <name type="common">Rhodoferax ferrireducens</name>
    <dbReference type="NCBI Taxonomy" id="338969"/>
    <lineage>
        <taxon>Bacteria</taxon>
        <taxon>Pseudomonadati</taxon>
        <taxon>Pseudomonadota</taxon>
        <taxon>Betaproteobacteria</taxon>
        <taxon>Burkholderiales</taxon>
        <taxon>Comamonadaceae</taxon>
        <taxon>Rhodoferax</taxon>
    </lineage>
</organism>
<proteinExistence type="inferred from homology"/>
<feature type="chain" id="PRO_1000149255" description="2-isopropylmalate synthase">
    <location>
        <begin position="1"/>
        <end position="512"/>
    </location>
</feature>
<feature type="domain" description="Pyruvate carboxyltransferase" evidence="1">
    <location>
        <begin position="5"/>
        <end position="268"/>
    </location>
</feature>
<feature type="region of interest" description="Regulatory domain" evidence="1">
    <location>
        <begin position="394"/>
        <end position="512"/>
    </location>
</feature>
<feature type="binding site" evidence="1">
    <location>
        <position position="14"/>
    </location>
    <ligand>
        <name>Mn(2+)</name>
        <dbReference type="ChEBI" id="CHEBI:29035"/>
    </ligand>
</feature>
<feature type="binding site" evidence="1">
    <location>
        <position position="202"/>
    </location>
    <ligand>
        <name>Mn(2+)</name>
        <dbReference type="ChEBI" id="CHEBI:29035"/>
    </ligand>
</feature>
<feature type="binding site" evidence="1">
    <location>
        <position position="204"/>
    </location>
    <ligand>
        <name>Mn(2+)</name>
        <dbReference type="ChEBI" id="CHEBI:29035"/>
    </ligand>
</feature>
<feature type="binding site" evidence="1">
    <location>
        <position position="239"/>
    </location>
    <ligand>
        <name>Mn(2+)</name>
        <dbReference type="ChEBI" id="CHEBI:29035"/>
    </ligand>
</feature>
<comment type="function">
    <text evidence="1">Catalyzes the condensation of the acetyl group of acetyl-CoA with 3-methyl-2-oxobutanoate (2-ketoisovalerate) to form 3-carboxy-3-hydroxy-4-methylpentanoate (2-isopropylmalate).</text>
</comment>
<comment type="catalytic activity">
    <reaction evidence="1">
        <text>3-methyl-2-oxobutanoate + acetyl-CoA + H2O = (2S)-2-isopropylmalate + CoA + H(+)</text>
        <dbReference type="Rhea" id="RHEA:21524"/>
        <dbReference type="ChEBI" id="CHEBI:1178"/>
        <dbReference type="ChEBI" id="CHEBI:11851"/>
        <dbReference type="ChEBI" id="CHEBI:15377"/>
        <dbReference type="ChEBI" id="CHEBI:15378"/>
        <dbReference type="ChEBI" id="CHEBI:57287"/>
        <dbReference type="ChEBI" id="CHEBI:57288"/>
        <dbReference type="EC" id="2.3.3.13"/>
    </reaction>
</comment>
<comment type="cofactor">
    <cofactor evidence="1">
        <name>Mn(2+)</name>
        <dbReference type="ChEBI" id="CHEBI:29035"/>
    </cofactor>
</comment>
<comment type="pathway">
    <text evidence="1">Amino-acid biosynthesis; L-leucine biosynthesis; L-leucine from 3-methyl-2-oxobutanoate: step 1/4.</text>
</comment>
<comment type="subunit">
    <text evidence="1">Homodimer.</text>
</comment>
<comment type="subcellular location">
    <subcellularLocation>
        <location evidence="1">Cytoplasm</location>
    </subcellularLocation>
</comment>
<comment type="similarity">
    <text evidence="1">Belongs to the alpha-IPM synthase/homocitrate synthase family. LeuA type 1 subfamily.</text>
</comment>
<evidence type="ECO:0000255" key="1">
    <source>
        <dbReference type="HAMAP-Rule" id="MF_01025"/>
    </source>
</evidence>
<reference key="1">
    <citation type="submission" date="2006-02" db="EMBL/GenBank/DDBJ databases">
        <title>Complete sequence of chromosome of Rhodoferax ferrireducens DSM 15236.</title>
        <authorList>
            <person name="Copeland A."/>
            <person name="Lucas S."/>
            <person name="Lapidus A."/>
            <person name="Barry K."/>
            <person name="Detter J.C."/>
            <person name="Glavina del Rio T."/>
            <person name="Hammon N."/>
            <person name="Israni S."/>
            <person name="Pitluck S."/>
            <person name="Brettin T."/>
            <person name="Bruce D."/>
            <person name="Han C."/>
            <person name="Tapia R."/>
            <person name="Gilna P."/>
            <person name="Kiss H."/>
            <person name="Schmutz J."/>
            <person name="Larimer F."/>
            <person name="Land M."/>
            <person name="Kyrpides N."/>
            <person name="Ivanova N."/>
            <person name="Richardson P."/>
        </authorList>
    </citation>
    <scope>NUCLEOTIDE SEQUENCE [LARGE SCALE GENOMIC DNA]</scope>
    <source>
        <strain>ATCC BAA-621 / DSM 15236 / T118</strain>
    </source>
</reference>
<protein>
    <recommendedName>
        <fullName evidence="1">2-isopropylmalate synthase</fullName>
        <ecNumber evidence="1">2.3.3.13</ecNumber>
    </recommendedName>
    <alternativeName>
        <fullName evidence="1">Alpha-IPM synthase</fullName>
    </alternativeName>
    <alternativeName>
        <fullName evidence="1">Alpha-isopropylmalate synthase</fullName>
    </alternativeName>
</protein>
<name>LEU1_ALBFT</name>
<keyword id="KW-0028">Amino-acid biosynthesis</keyword>
<keyword id="KW-0100">Branched-chain amino acid biosynthesis</keyword>
<keyword id="KW-0963">Cytoplasm</keyword>
<keyword id="KW-0432">Leucine biosynthesis</keyword>
<keyword id="KW-0464">Manganese</keyword>
<keyword id="KW-0479">Metal-binding</keyword>
<keyword id="KW-1185">Reference proteome</keyword>
<keyword id="KW-0808">Transferase</keyword>
<sequence>MADQLIIFDTTLRDGEQSPGASMNKDEKLRIARQLERLKVDVIEAGFAASSNGDFEAVQGIARAIKDSTICSLSRANDRDISRAAEALKGANRSRIHTFIATSALHMEKKLRMTPDQVFEQAKLAVRFARNLVADVEFSPEDAYRSDEDFLCRVIEAAINEGATTINVPDTVGYAIPELYGTFIKTLRERVPNSDKAIWSVHCHNDLGMAVANSLAGVKIGGARQVECTINGLGERAGNCSLEEVVMAVKTRRDYFGLDVDIETQHILAASRMVSQITGFVVQPNKAIVGANAFAHAAGIHQDGVLKARDTYEIMRAEDVGWSANKIVLSKVSGRNAFKQRLQDLGAQMESESDVNAAFARFKELADRKSEIFDEDILALVGSESVAREKEQYSFVSLSQHSETGERPQASIVFTADGKEVKSSSDGDGPVDASLKAIEAQVKSGAEMVLYSVNAISGSTESQGEVTVRLQHGGRVVNGVGADPDIIVASAKAYLSALSKLHSKADRVAAQG</sequence>
<accession>Q21VZ1</accession>
<dbReference type="EC" id="2.3.3.13" evidence="1"/>
<dbReference type="EMBL" id="CP000267">
    <property type="protein sequence ID" value="ABD70062.1"/>
    <property type="molecule type" value="Genomic_DNA"/>
</dbReference>
<dbReference type="RefSeq" id="WP_011464630.1">
    <property type="nucleotide sequence ID" value="NC_007908.1"/>
</dbReference>
<dbReference type="SMR" id="Q21VZ1"/>
<dbReference type="STRING" id="338969.Rfer_2345"/>
<dbReference type="KEGG" id="rfr:Rfer_2345"/>
<dbReference type="eggNOG" id="COG0119">
    <property type="taxonomic scope" value="Bacteria"/>
</dbReference>
<dbReference type="HOGENOM" id="CLU_022158_0_1_4"/>
<dbReference type="OrthoDB" id="9803573at2"/>
<dbReference type="UniPathway" id="UPA00048">
    <property type="reaction ID" value="UER00070"/>
</dbReference>
<dbReference type="Proteomes" id="UP000008332">
    <property type="component" value="Chromosome"/>
</dbReference>
<dbReference type="GO" id="GO:0005829">
    <property type="term" value="C:cytosol"/>
    <property type="evidence" value="ECO:0007669"/>
    <property type="project" value="TreeGrafter"/>
</dbReference>
<dbReference type="GO" id="GO:0003852">
    <property type="term" value="F:2-isopropylmalate synthase activity"/>
    <property type="evidence" value="ECO:0007669"/>
    <property type="project" value="UniProtKB-UniRule"/>
</dbReference>
<dbReference type="GO" id="GO:0003985">
    <property type="term" value="F:acetyl-CoA C-acetyltransferase activity"/>
    <property type="evidence" value="ECO:0007669"/>
    <property type="project" value="UniProtKB-UniRule"/>
</dbReference>
<dbReference type="GO" id="GO:0030145">
    <property type="term" value="F:manganese ion binding"/>
    <property type="evidence" value="ECO:0007669"/>
    <property type="project" value="UniProtKB-UniRule"/>
</dbReference>
<dbReference type="GO" id="GO:0009098">
    <property type="term" value="P:L-leucine biosynthetic process"/>
    <property type="evidence" value="ECO:0007669"/>
    <property type="project" value="UniProtKB-UniRule"/>
</dbReference>
<dbReference type="CDD" id="cd07940">
    <property type="entry name" value="DRE_TIM_IPMS"/>
    <property type="match status" value="1"/>
</dbReference>
<dbReference type="FunFam" id="1.10.238.260:FF:000001">
    <property type="entry name" value="2-isopropylmalate synthase"/>
    <property type="match status" value="1"/>
</dbReference>
<dbReference type="FunFam" id="3.20.20.70:FF:000010">
    <property type="entry name" value="2-isopropylmalate synthase"/>
    <property type="match status" value="1"/>
</dbReference>
<dbReference type="Gene3D" id="1.10.238.260">
    <property type="match status" value="1"/>
</dbReference>
<dbReference type="Gene3D" id="3.30.160.270">
    <property type="match status" value="1"/>
</dbReference>
<dbReference type="Gene3D" id="3.20.20.70">
    <property type="entry name" value="Aldolase class I"/>
    <property type="match status" value="1"/>
</dbReference>
<dbReference type="HAMAP" id="MF_01025">
    <property type="entry name" value="LeuA_type1"/>
    <property type="match status" value="1"/>
</dbReference>
<dbReference type="InterPro" id="IPR050073">
    <property type="entry name" value="2-IPM_HCS-like"/>
</dbReference>
<dbReference type="InterPro" id="IPR013709">
    <property type="entry name" value="2-isopropylmalate_synth_dimer"/>
</dbReference>
<dbReference type="InterPro" id="IPR002034">
    <property type="entry name" value="AIPM/Hcit_synth_CS"/>
</dbReference>
<dbReference type="InterPro" id="IPR013785">
    <property type="entry name" value="Aldolase_TIM"/>
</dbReference>
<dbReference type="InterPro" id="IPR054691">
    <property type="entry name" value="LeuA/HCS_post-cat"/>
</dbReference>
<dbReference type="InterPro" id="IPR036230">
    <property type="entry name" value="LeuA_allosteric_dom_sf"/>
</dbReference>
<dbReference type="InterPro" id="IPR005671">
    <property type="entry name" value="LeuA_bact_synth"/>
</dbReference>
<dbReference type="InterPro" id="IPR000891">
    <property type="entry name" value="PYR_CT"/>
</dbReference>
<dbReference type="NCBIfam" id="TIGR00973">
    <property type="entry name" value="leuA_bact"/>
    <property type="match status" value="1"/>
</dbReference>
<dbReference type="NCBIfam" id="NF002086">
    <property type="entry name" value="PRK00915.1-3"/>
    <property type="match status" value="1"/>
</dbReference>
<dbReference type="NCBIfam" id="NF002087">
    <property type="entry name" value="PRK00915.1-4"/>
    <property type="match status" value="1"/>
</dbReference>
<dbReference type="PANTHER" id="PTHR10277:SF9">
    <property type="entry name" value="2-ISOPROPYLMALATE SYNTHASE 1, CHLOROPLASTIC-RELATED"/>
    <property type="match status" value="1"/>
</dbReference>
<dbReference type="PANTHER" id="PTHR10277">
    <property type="entry name" value="HOMOCITRATE SYNTHASE-RELATED"/>
    <property type="match status" value="1"/>
</dbReference>
<dbReference type="Pfam" id="PF22617">
    <property type="entry name" value="HCS_D2"/>
    <property type="match status" value="1"/>
</dbReference>
<dbReference type="Pfam" id="PF00682">
    <property type="entry name" value="HMGL-like"/>
    <property type="match status" value="1"/>
</dbReference>
<dbReference type="Pfam" id="PF08502">
    <property type="entry name" value="LeuA_dimer"/>
    <property type="match status" value="1"/>
</dbReference>
<dbReference type="SMART" id="SM00917">
    <property type="entry name" value="LeuA_dimer"/>
    <property type="match status" value="1"/>
</dbReference>
<dbReference type="SUPFAM" id="SSF110921">
    <property type="entry name" value="2-isopropylmalate synthase LeuA, allosteric (dimerisation) domain"/>
    <property type="match status" value="1"/>
</dbReference>
<dbReference type="SUPFAM" id="SSF51569">
    <property type="entry name" value="Aldolase"/>
    <property type="match status" value="1"/>
</dbReference>
<dbReference type="PROSITE" id="PS00815">
    <property type="entry name" value="AIPM_HOMOCIT_SYNTH_1"/>
    <property type="match status" value="1"/>
</dbReference>
<dbReference type="PROSITE" id="PS00816">
    <property type="entry name" value="AIPM_HOMOCIT_SYNTH_2"/>
    <property type="match status" value="1"/>
</dbReference>
<dbReference type="PROSITE" id="PS50991">
    <property type="entry name" value="PYR_CT"/>
    <property type="match status" value="1"/>
</dbReference>
<gene>
    <name evidence="1" type="primary">leuA</name>
    <name type="ordered locus">Rfer_2345</name>
</gene>